<dbReference type="EC" id="1.10.3.9" evidence="1"/>
<dbReference type="EMBL" id="DQ383815">
    <property type="protein sequence ID" value="ABD47126.1"/>
    <property type="molecule type" value="Genomic_DNA"/>
</dbReference>
<dbReference type="RefSeq" id="YP_588097.1">
    <property type="nucleotide sequence ID" value="NC_007977.1"/>
</dbReference>
<dbReference type="SMR" id="Q1KXX9"/>
<dbReference type="GeneID" id="4055636"/>
<dbReference type="KEGG" id="han:4055636"/>
<dbReference type="OrthoDB" id="143at2759"/>
<dbReference type="PhylomeDB" id="Q1KXX9"/>
<dbReference type="GO" id="GO:0009535">
    <property type="term" value="C:chloroplast thylakoid membrane"/>
    <property type="evidence" value="ECO:0007669"/>
    <property type="project" value="UniProtKB-SubCell"/>
</dbReference>
<dbReference type="GO" id="GO:0009523">
    <property type="term" value="C:photosystem II"/>
    <property type="evidence" value="ECO:0007669"/>
    <property type="project" value="UniProtKB-KW"/>
</dbReference>
<dbReference type="GO" id="GO:0016168">
    <property type="term" value="F:chlorophyll binding"/>
    <property type="evidence" value="ECO:0007669"/>
    <property type="project" value="UniProtKB-UniRule"/>
</dbReference>
<dbReference type="GO" id="GO:0045156">
    <property type="term" value="F:electron transporter, transferring electrons within the cyclic electron transport pathway of photosynthesis activity"/>
    <property type="evidence" value="ECO:0007669"/>
    <property type="project" value="InterPro"/>
</dbReference>
<dbReference type="GO" id="GO:0005506">
    <property type="term" value="F:iron ion binding"/>
    <property type="evidence" value="ECO:0007669"/>
    <property type="project" value="UniProtKB-UniRule"/>
</dbReference>
<dbReference type="GO" id="GO:0016682">
    <property type="term" value="F:oxidoreductase activity, acting on diphenols and related substances as donors, oxygen as acceptor"/>
    <property type="evidence" value="ECO:0007669"/>
    <property type="project" value="UniProtKB-UniRule"/>
</dbReference>
<dbReference type="GO" id="GO:0010242">
    <property type="term" value="F:oxygen evolving activity"/>
    <property type="evidence" value="ECO:0007669"/>
    <property type="project" value="UniProtKB-EC"/>
</dbReference>
<dbReference type="GO" id="GO:0009772">
    <property type="term" value="P:photosynthetic electron transport in photosystem II"/>
    <property type="evidence" value="ECO:0007669"/>
    <property type="project" value="InterPro"/>
</dbReference>
<dbReference type="GO" id="GO:0009635">
    <property type="term" value="P:response to herbicide"/>
    <property type="evidence" value="ECO:0007669"/>
    <property type="project" value="UniProtKB-KW"/>
</dbReference>
<dbReference type="CDD" id="cd09289">
    <property type="entry name" value="Photosystem-II_D1"/>
    <property type="match status" value="1"/>
</dbReference>
<dbReference type="FunFam" id="1.20.85.10:FF:000002">
    <property type="entry name" value="Photosystem II protein D1"/>
    <property type="match status" value="1"/>
</dbReference>
<dbReference type="Gene3D" id="1.20.85.10">
    <property type="entry name" value="Photosystem II protein D1-like"/>
    <property type="match status" value="1"/>
</dbReference>
<dbReference type="HAMAP" id="MF_01379">
    <property type="entry name" value="PSII_PsbA_D1"/>
    <property type="match status" value="1"/>
</dbReference>
<dbReference type="InterPro" id="IPR055266">
    <property type="entry name" value="D1/D2"/>
</dbReference>
<dbReference type="InterPro" id="IPR036854">
    <property type="entry name" value="Photo_II_D1/D2_sf"/>
</dbReference>
<dbReference type="InterPro" id="IPR000484">
    <property type="entry name" value="Photo_RC_L/M"/>
</dbReference>
<dbReference type="InterPro" id="IPR055265">
    <property type="entry name" value="Photo_RC_L/M_CS"/>
</dbReference>
<dbReference type="InterPro" id="IPR005867">
    <property type="entry name" value="PSII_D1"/>
</dbReference>
<dbReference type="NCBIfam" id="TIGR01151">
    <property type="entry name" value="psbA"/>
    <property type="match status" value="1"/>
</dbReference>
<dbReference type="PANTHER" id="PTHR33149:SF12">
    <property type="entry name" value="PHOTOSYSTEM II D2 PROTEIN"/>
    <property type="match status" value="1"/>
</dbReference>
<dbReference type="PANTHER" id="PTHR33149">
    <property type="entry name" value="PHOTOSYSTEM II PROTEIN D1"/>
    <property type="match status" value="1"/>
</dbReference>
<dbReference type="Pfam" id="PF00124">
    <property type="entry name" value="Photo_RC"/>
    <property type="match status" value="1"/>
</dbReference>
<dbReference type="PRINTS" id="PR00256">
    <property type="entry name" value="REACTNCENTRE"/>
</dbReference>
<dbReference type="SUPFAM" id="SSF81483">
    <property type="entry name" value="Bacterial photosystem II reaction centre, L and M subunits"/>
    <property type="match status" value="1"/>
</dbReference>
<dbReference type="PROSITE" id="PS00244">
    <property type="entry name" value="REACTION_CENTER"/>
    <property type="match status" value="1"/>
</dbReference>
<geneLocation type="chloroplast"/>
<comment type="function">
    <text evidence="1">Photosystem II (PSII) is a light-driven water:plastoquinone oxidoreductase that uses light energy to abstract electrons from H(2)O, generating O(2) and a proton gradient subsequently used for ATP formation. It consists of a core antenna complex that captures photons, and an electron transfer chain that converts photonic excitation into a charge separation. The D1/D2 (PsbA/PsbD) reaction center heterodimer binds P680, the primary electron donor of PSII as well as several subsequent electron acceptors.</text>
</comment>
<comment type="catalytic activity">
    <reaction evidence="1">
        <text>2 a plastoquinone + 4 hnu + 2 H2O = 2 a plastoquinol + O2</text>
        <dbReference type="Rhea" id="RHEA:36359"/>
        <dbReference type="Rhea" id="RHEA-COMP:9561"/>
        <dbReference type="Rhea" id="RHEA-COMP:9562"/>
        <dbReference type="ChEBI" id="CHEBI:15377"/>
        <dbReference type="ChEBI" id="CHEBI:15379"/>
        <dbReference type="ChEBI" id="CHEBI:17757"/>
        <dbReference type="ChEBI" id="CHEBI:30212"/>
        <dbReference type="ChEBI" id="CHEBI:62192"/>
        <dbReference type="EC" id="1.10.3.9"/>
    </reaction>
</comment>
<comment type="cofactor">
    <text evidence="1">The D1/D2 heterodimer binds P680, chlorophylls that are the primary electron donor of PSII, and subsequent electron acceptors. It shares a non-heme iron and each subunit binds pheophytin, quinone, additional chlorophylls, carotenoids and lipids. D1 provides most of the ligands for the Mn4-Ca-O5 cluster of the oxygen-evolving complex (OEC). There is also a Cl(-1) ion associated with D1 and D2, which is required for oxygen evolution. The PSII complex binds additional chlorophylls, carotenoids and specific lipids.</text>
</comment>
<comment type="subunit">
    <text evidence="1">PSII is composed of 1 copy each of membrane proteins PsbA, PsbB, PsbC, PsbD, PsbE, PsbF, PsbH, PsbI, PsbJ, PsbK, PsbL, PsbM, PsbT, PsbX, PsbY, PsbZ, Psb30/Ycf12, at least 3 peripheral proteins of the oxygen-evolving complex and a large number of cofactors. It forms dimeric complexes.</text>
</comment>
<comment type="subcellular location">
    <subcellularLocation>
        <location evidence="1">Plastid</location>
        <location evidence="1">Chloroplast thylakoid membrane</location>
        <topology evidence="1">Multi-pass membrane protein</topology>
    </subcellularLocation>
</comment>
<comment type="PTM">
    <text evidence="1">Tyr-161 forms a radical intermediate that is referred to as redox-active TyrZ, YZ or Y-Z.</text>
</comment>
<comment type="PTM">
    <text evidence="1">C-terminally processed by CTPA; processing is essential to allow assembly of the oxygen-evolving complex and thus photosynthetic growth.</text>
</comment>
<comment type="miscellaneous">
    <text evidence="1">2 of the reaction center chlorophylls (ChlD1 and ChlD2) are entirely coordinated by water.</text>
</comment>
<comment type="miscellaneous">
    <text evidence="1">Herbicides such as atrazine, BNT, diuron or ioxynil bind in the Q(B) binding site and block subsequent electron transfer.</text>
</comment>
<comment type="similarity">
    <text evidence="1">Belongs to the reaction center PufL/M/PsbA/D family.</text>
</comment>
<organism>
    <name type="scientific">Helianthus annuus</name>
    <name type="common">Common sunflower</name>
    <dbReference type="NCBI Taxonomy" id="4232"/>
    <lineage>
        <taxon>Eukaryota</taxon>
        <taxon>Viridiplantae</taxon>
        <taxon>Streptophyta</taxon>
        <taxon>Embryophyta</taxon>
        <taxon>Tracheophyta</taxon>
        <taxon>Spermatophyta</taxon>
        <taxon>Magnoliopsida</taxon>
        <taxon>eudicotyledons</taxon>
        <taxon>Gunneridae</taxon>
        <taxon>Pentapetalae</taxon>
        <taxon>asterids</taxon>
        <taxon>campanulids</taxon>
        <taxon>Asterales</taxon>
        <taxon>Asteraceae</taxon>
        <taxon>Asteroideae</taxon>
        <taxon>Heliantheae alliance</taxon>
        <taxon>Heliantheae</taxon>
        <taxon>Helianthus</taxon>
    </lineage>
</organism>
<keyword id="KW-0007">Acetylation</keyword>
<keyword id="KW-0106">Calcium</keyword>
<keyword id="KW-0148">Chlorophyll</keyword>
<keyword id="KW-0150">Chloroplast</keyword>
<keyword id="KW-0157">Chromophore</keyword>
<keyword id="KW-0249">Electron transport</keyword>
<keyword id="KW-0359">Herbicide resistance</keyword>
<keyword id="KW-0408">Iron</keyword>
<keyword id="KW-0460">Magnesium</keyword>
<keyword id="KW-0464">Manganese</keyword>
<keyword id="KW-0472">Membrane</keyword>
<keyword id="KW-0479">Metal-binding</keyword>
<keyword id="KW-0560">Oxidoreductase</keyword>
<keyword id="KW-0597">Phosphoprotein</keyword>
<keyword id="KW-0602">Photosynthesis</keyword>
<keyword id="KW-0604">Photosystem II</keyword>
<keyword id="KW-0934">Plastid</keyword>
<keyword id="KW-0793">Thylakoid</keyword>
<keyword id="KW-0812">Transmembrane</keyword>
<keyword id="KW-1133">Transmembrane helix</keyword>
<keyword id="KW-0813">Transport</keyword>
<evidence type="ECO:0000255" key="1">
    <source>
        <dbReference type="HAMAP-Rule" id="MF_01379"/>
    </source>
</evidence>
<feature type="initiator methionine" description="Removed" evidence="1">
    <location>
        <position position="1"/>
    </location>
</feature>
<feature type="chain" id="PRO_0000339997" description="Photosystem II protein D1" evidence="1">
    <location>
        <begin position="2"/>
        <end position="344"/>
    </location>
</feature>
<feature type="propeptide" id="PRO_0000339998" evidence="1">
    <location>
        <begin position="345"/>
        <end position="353"/>
    </location>
</feature>
<feature type="transmembrane region" description="Helical" evidence="1">
    <location>
        <begin position="29"/>
        <end position="46"/>
    </location>
</feature>
<feature type="transmembrane region" description="Helical" evidence="1">
    <location>
        <begin position="118"/>
        <end position="133"/>
    </location>
</feature>
<feature type="transmembrane region" description="Helical" evidence="1">
    <location>
        <begin position="142"/>
        <end position="156"/>
    </location>
</feature>
<feature type="transmembrane region" description="Helical" evidence="1">
    <location>
        <begin position="197"/>
        <end position="218"/>
    </location>
</feature>
<feature type="transmembrane region" description="Helical" evidence="1">
    <location>
        <begin position="274"/>
        <end position="288"/>
    </location>
</feature>
<feature type="binding site" description="axial binding residue" evidence="1">
    <location>
        <position position="118"/>
    </location>
    <ligand>
        <name>chlorophyll a</name>
        <dbReference type="ChEBI" id="CHEBI:58416"/>
        <label>ChlzD1</label>
    </ligand>
    <ligandPart>
        <name>Mg</name>
        <dbReference type="ChEBI" id="CHEBI:25107"/>
    </ligandPart>
</feature>
<feature type="binding site" evidence="1">
    <location>
        <position position="126"/>
    </location>
    <ligand>
        <name>pheophytin a</name>
        <dbReference type="ChEBI" id="CHEBI:136840"/>
        <label>D1</label>
    </ligand>
</feature>
<feature type="binding site" evidence="1">
    <location>
        <position position="170"/>
    </location>
    <ligand>
        <name>[CaMn4O5] cluster</name>
        <dbReference type="ChEBI" id="CHEBI:189552"/>
    </ligand>
</feature>
<feature type="binding site" evidence="1">
    <location>
        <position position="189"/>
    </location>
    <ligand>
        <name>[CaMn4O5] cluster</name>
        <dbReference type="ChEBI" id="CHEBI:189552"/>
    </ligand>
</feature>
<feature type="binding site" description="axial binding residue" evidence="1">
    <location>
        <position position="198"/>
    </location>
    <ligand>
        <name>chlorophyll a</name>
        <dbReference type="ChEBI" id="CHEBI:58416"/>
        <label>PD1</label>
    </ligand>
    <ligandPart>
        <name>Mg</name>
        <dbReference type="ChEBI" id="CHEBI:25107"/>
    </ligandPart>
</feature>
<feature type="binding site" evidence="1">
    <location>
        <position position="215"/>
    </location>
    <ligand>
        <name>a quinone</name>
        <dbReference type="ChEBI" id="CHEBI:132124"/>
        <label>B</label>
    </ligand>
</feature>
<feature type="binding site" evidence="1">
    <location>
        <position position="215"/>
    </location>
    <ligand>
        <name>Fe cation</name>
        <dbReference type="ChEBI" id="CHEBI:24875"/>
        <note>ligand shared with heterodimeric partner</note>
    </ligand>
</feature>
<feature type="binding site" evidence="1">
    <location>
        <begin position="264"/>
        <end position="265"/>
    </location>
    <ligand>
        <name>a quinone</name>
        <dbReference type="ChEBI" id="CHEBI:132124"/>
        <label>B</label>
    </ligand>
</feature>
<feature type="binding site" evidence="1">
    <location>
        <position position="272"/>
    </location>
    <ligand>
        <name>Fe cation</name>
        <dbReference type="ChEBI" id="CHEBI:24875"/>
        <note>ligand shared with heterodimeric partner</note>
    </ligand>
</feature>
<feature type="binding site" evidence="1">
    <location>
        <position position="332"/>
    </location>
    <ligand>
        <name>[CaMn4O5] cluster</name>
        <dbReference type="ChEBI" id="CHEBI:189552"/>
    </ligand>
</feature>
<feature type="binding site" evidence="1">
    <location>
        <position position="333"/>
    </location>
    <ligand>
        <name>[CaMn4O5] cluster</name>
        <dbReference type="ChEBI" id="CHEBI:189552"/>
    </ligand>
</feature>
<feature type="binding site" evidence="1">
    <location>
        <position position="342"/>
    </location>
    <ligand>
        <name>[CaMn4O5] cluster</name>
        <dbReference type="ChEBI" id="CHEBI:189552"/>
    </ligand>
</feature>
<feature type="binding site" evidence="1">
    <location>
        <position position="344"/>
    </location>
    <ligand>
        <name>[CaMn4O5] cluster</name>
        <dbReference type="ChEBI" id="CHEBI:189552"/>
    </ligand>
</feature>
<feature type="site" description="Tyrosine radical intermediate" evidence="1">
    <location>
        <position position="161"/>
    </location>
</feature>
<feature type="site" description="Stabilizes free radical intermediate" evidence="1">
    <location>
        <position position="190"/>
    </location>
</feature>
<feature type="site" description="Cleavage; by CTPA" evidence="1">
    <location>
        <begin position="344"/>
        <end position="345"/>
    </location>
</feature>
<feature type="modified residue" description="N-acetylthreonine" evidence="1">
    <location>
        <position position="2"/>
    </location>
</feature>
<feature type="modified residue" description="Phosphothreonine" evidence="1">
    <location>
        <position position="2"/>
    </location>
</feature>
<accession>Q1KXX9</accession>
<reference key="1">
    <citation type="submission" date="2006-01" db="EMBL/GenBank/DDBJ databases">
        <title>A comparison of the first two published chloroplast genomes in Asteraceae: Lactuca and Helianthus.</title>
        <authorList>
            <person name="Timme R.E."/>
            <person name="Kuehl J.V."/>
            <person name="Boore J.L."/>
            <person name="Jansen R.K."/>
        </authorList>
    </citation>
    <scope>NUCLEOTIDE SEQUENCE [LARGE SCALE GENOMIC DNA]</scope>
    <source>
        <strain>cv. HA383</strain>
    </source>
</reference>
<gene>
    <name evidence="1" type="primary">psbA</name>
</gene>
<protein>
    <recommendedName>
        <fullName evidence="1">Photosystem II protein D1</fullName>
        <shortName evidence="1">PSII D1 protein</shortName>
        <ecNumber evidence="1">1.10.3.9</ecNumber>
    </recommendedName>
    <alternativeName>
        <fullName evidence="1">Photosystem II Q(B) protein</fullName>
    </alternativeName>
</protein>
<name>PSBA_HELAN</name>
<sequence>MTAILERRESESLWGRFCNWITSTENRLYIGWFGVLMIPTLLTATSVFIIAFIAAPPVDIDGIREPVSGSLLYGNNIISGAIIPTSAAIGLHFYPIWEAASVDEWLYNGGPYELIVLHFLLGVACYMGREWELSFRLGMRPWIAVAYSAPVAAATAVFLIYPIGQGSFSDGMPLGISGTFNFMIVFQAEHNILMHPFHMLGVAGVFGGSLFSAMHGSLVTSSLIRETTENESANEGYRFGQEEETYNIVAAHGYFGRLIFQYASFNNSRSLHFFLAAWPVVGIWFTALGISTMAFNLNGFNFNQSVVDSQGRVINTWADIINRANLGMEVMHERNAHNFPLDLAAIEAPSTNG</sequence>
<proteinExistence type="inferred from homology"/>